<protein>
    <recommendedName>
        <fullName evidence="1">GTPase Der</fullName>
    </recommendedName>
    <alternativeName>
        <fullName evidence="1">GTP-binding protein EngA</fullName>
    </alternativeName>
</protein>
<reference key="1">
    <citation type="journal article" date="2008" name="ISME J.">
        <title>Comparative genomics of two ecotypes of the marine planktonic copiotroph Alteromonas macleodii suggests alternative lifestyles associated with different kinds of particulate organic matter.</title>
        <authorList>
            <person name="Ivars-Martinez E."/>
            <person name="Martin-Cuadrado A.-B."/>
            <person name="D'Auria G."/>
            <person name="Mira A."/>
            <person name="Ferriera S."/>
            <person name="Johnson J."/>
            <person name="Friedman R."/>
            <person name="Rodriguez-Valera F."/>
        </authorList>
    </citation>
    <scope>NUCLEOTIDE SEQUENCE [LARGE SCALE GENOMIC DNA]</scope>
    <source>
        <strain>DSM 17117 / CIP 110805 / LMG 28347 / Deep ecotype</strain>
    </source>
</reference>
<name>DER_ALTMD</name>
<accession>B4RV85</accession>
<accession>F2G259</accession>
<sequence>MLPVVALVGRPNVGKSTLFNRLTNTRDALVADYPGLTRDRKYGQAKFEKRQFIVVDTGGITGDEEGIDAEMAQQSLLAIEEADVVLFLVDARAGLLPADQGIADHLRRINKQIFVVANKVDGIDGDSESAEFYSLGLGAIKQIAAAHGRGVSQLLQDALKPLESDFPDMEIIDEAPEEEEDAESQRQRLQELPIKLAIVGKPNVGKSTLTNRILGEERVVVYDMPGTTRDSVYIPMERDEREYILIDTAGVRKRKKISEAVEKFSIVKTLQAIEEANVVLLVIDAREGITDQDLSLLGFVLNSGRSLVVAVNKWDGLSTDIKDDIKREMDRRLGFIDFARIHFISALHGSGVGNLFESVQEAYMSATKRINTALLTQIMEMAQDDHQPPLVRGRRVKMKYAHAGGYNPPVIVIHGNQVDDLPSSYKRFLMNYFRKALEIMGTPIKIEFREGNNPFEGKKNNLTLAQQRKRRRMMSYYKEKK</sequence>
<comment type="function">
    <text evidence="1">GTPase that plays an essential role in the late steps of ribosome biogenesis.</text>
</comment>
<comment type="subunit">
    <text evidence="1">Associates with the 50S ribosomal subunit.</text>
</comment>
<comment type="similarity">
    <text evidence="1">Belongs to the TRAFAC class TrmE-Era-EngA-EngB-Septin-like GTPase superfamily. EngA (Der) GTPase family.</text>
</comment>
<proteinExistence type="inferred from homology"/>
<gene>
    <name evidence="1" type="primary">der1</name>
    <name type="synonym">engA1</name>
    <name type="ordered locus">MADE_1005235</name>
</gene>
<gene>
    <name evidence="1" type="primary">der2</name>
    <name type="synonym">engA2</name>
    <name type="ordered locus">MADE_1012830</name>
</gene>
<dbReference type="EMBL" id="CP001103">
    <property type="protein sequence ID" value="AEA97193.1"/>
    <property type="molecule type" value="Genomic_DNA"/>
</dbReference>
<dbReference type="EMBL" id="CP001103">
    <property type="protein sequence ID" value="AEA98700.1"/>
    <property type="molecule type" value="Genomic_DNA"/>
</dbReference>
<dbReference type="SMR" id="B4RV85"/>
<dbReference type="KEGG" id="amc:MADE_1005235"/>
<dbReference type="HOGENOM" id="CLU_016077_6_2_6"/>
<dbReference type="Proteomes" id="UP000001870">
    <property type="component" value="Chromosome"/>
</dbReference>
<dbReference type="GO" id="GO:0016887">
    <property type="term" value="F:ATP hydrolysis activity"/>
    <property type="evidence" value="ECO:0007669"/>
    <property type="project" value="InterPro"/>
</dbReference>
<dbReference type="GO" id="GO:0005525">
    <property type="term" value="F:GTP binding"/>
    <property type="evidence" value="ECO:0007669"/>
    <property type="project" value="UniProtKB-UniRule"/>
</dbReference>
<dbReference type="GO" id="GO:0043022">
    <property type="term" value="F:ribosome binding"/>
    <property type="evidence" value="ECO:0007669"/>
    <property type="project" value="TreeGrafter"/>
</dbReference>
<dbReference type="GO" id="GO:0042254">
    <property type="term" value="P:ribosome biogenesis"/>
    <property type="evidence" value="ECO:0007669"/>
    <property type="project" value="UniProtKB-KW"/>
</dbReference>
<dbReference type="CDD" id="cd01894">
    <property type="entry name" value="EngA1"/>
    <property type="match status" value="1"/>
</dbReference>
<dbReference type="CDD" id="cd01895">
    <property type="entry name" value="EngA2"/>
    <property type="match status" value="1"/>
</dbReference>
<dbReference type="FunFam" id="3.30.300.20:FF:000004">
    <property type="entry name" value="GTPase Der"/>
    <property type="match status" value="1"/>
</dbReference>
<dbReference type="FunFam" id="3.40.50.300:FF:000040">
    <property type="entry name" value="GTPase Der"/>
    <property type="match status" value="1"/>
</dbReference>
<dbReference type="FunFam" id="3.40.50.300:FF:000057">
    <property type="entry name" value="GTPase Der"/>
    <property type="match status" value="1"/>
</dbReference>
<dbReference type="Gene3D" id="3.30.300.20">
    <property type="match status" value="1"/>
</dbReference>
<dbReference type="Gene3D" id="3.40.50.300">
    <property type="entry name" value="P-loop containing nucleotide triphosphate hydrolases"/>
    <property type="match status" value="2"/>
</dbReference>
<dbReference type="HAMAP" id="MF_00195">
    <property type="entry name" value="GTPase_Der"/>
    <property type="match status" value="1"/>
</dbReference>
<dbReference type="InterPro" id="IPR003593">
    <property type="entry name" value="AAA+_ATPase"/>
</dbReference>
<dbReference type="InterPro" id="IPR031166">
    <property type="entry name" value="G_ENGA"/>
</dbReference>
<dbReference type="InterPro" id="IPR006073">
    <property type="entry name" value="GTP-bd"/>
</dbReference>
<dbReference type="InterPro" id="IPR016484">
    <property type="entry name" value="GTPase_Der"/>
</dbReference>
<dbReference type="InterPro" id="IPR032859">
    <property type="entry name" value="KH_dom-like"/>
</dbReference>
<dbReference type="InterPro" id="IPR015946">
    <property type="entry name" value="KH_dom-like_a/b"/>
</dbReference>
<dbReference type="InterPro" id="IPR027417">
    <property type="entry name" value="P-loop_NTPase"/>
</dbReference>
<dbReference type="InterPro" id="IPR005225">
    <property type="entry name" value="Small_GTP-bd"/>
</dbReference>
<dbReference type="NCBIfam" id="TIGR03594">
    <property type="entry name" value="GTPase_EngA"/>
    <property type="match status" value="1"/>
</dbReference>
<dbReference type="NCBIfam" id="TIGR00231">
    <property type="entry name" value="small_GTP"/>
    <property type="match status" value="2"/>
</dbReference>
<dbReference type="PANTHER" id="PTHR43834">
    <property type="entry name" value="GTPASE DER"/>
    <property type="match status" value="1"/>
</dbReference>
<dbReference type="PANTHER" id="PTHR43834:SF6">
    <property type="entry name" value="GTPASE DER"/>
    <property type="match status" value="1"/>
</dbReference>
<dbReference type="Pfam" id="PF14714">
    <property type="entry name" value="KH_dom-like"/>
    <property type="match status" value="1"/>
</dbReference>
<dbReference type="Pfam" id="PF01926">
    <property type="entry name" value="MMR_HSR1"/>
    <property type="match status" value="2"/>
</dbReference>
<dbReference type="PIRSF" id="PIRSF006485">
    <property type="entry name" value="GTP-binding_EngA"/>
    <property type="match status" value="1"/>
</dbReference>
<dbReference type="PRINTS" id="PR00326">
    <property type="entry name" value="GTP1OBG"/>
</dbReference>
<dbReference type="SMART" id="SM00382">
    <property type="entry name" value="AAA"/>
    <property type="match status" value="2"/>
</dbReference>
<dbReference type="SUPFAM" id="SSF52540">
    <property type="entry name" value="P-loop containing nucleoside triphosphate hydrolases"/>
    <property type="match status" value="2"/>
</dbReference>
<dbReference type="PROSITE" id="PS51712">
    <property type="entry name" value="G_ENGA"/>
    <property type="match status" value="2"/>
</dbReference>
<feature type="chain" id="PRO_1000099088" description="GTPase Der">
    <location>
        <begin position="1"/>
        <end position="481"/>
    </location>
</feature>
<feature type="domain" description="EngA-type G 1">
    <location>
        <begin position="3"/>
        <end position="166"/>
    </location>
</feature>
<feature type="domain" description="EngA-type G 2">
    <location>
        <begin position="194"/>
        <end position="367"/>
    </location>
</feature>
<feature type="domain" description="KH-like" evidence="1">
    <location>
        <begin position="368"/>
        <end position="452"/>
    </location>
</feature>
<feature type="binding site" evidence="1">
    <location>
        <begin position="9"/>
        <end position="16"/>
    </location>
    <ligand>
        <name>GTP</name>
        <dbReference type="ChEBI" id="CHEBI:37565"/>
        <label>1</label>
    </ligand>
</feature>
<feature type="binding site" evidence="1">
    <location>
        <begin position="56"/>
        <end position="60"/>
    </location>
    <ligand>
        <name>GTP</name>
        <dbReference type="ChEBI" id="CHEBI:37565"/>
        <label>1</label>
    </ligand>
</feature>
<feature type="binding site" evidence="1">
    <location>
        <begin position="118"/>
        <end position="121"/>
    </location>
    <ligand>
        <name>GTP</name>
        <dbReference type="ChEBI" id="CHEBI:37565"/>
        <label>1</label>
    </ligand>
</feature>
<feature type="binding site" evidence="1">
    <location>
        <begin position="200"/>
        <end position="207"/>
    </location>
    <ligand>
        <name>GTP</name>
        <dbReference type="ChEBI" id="CHEBI:37565"/>
        <label>2</label>
    </ligand>
</feature>
<feature type="binding site" evidence="1">
    <location>
        <begin position="247"/>
        <end position="251"/>
    </location>
    <ligand>
        <name>GTP</name>
        <dbReference type="ChEBI" id="CHEBI:37565"/>
        <label>2</label>
    </ligand>
</feature>
<feature type="binding site" evidence="1">
    <location>
        <begin position="312"/>
        <end position="315"/>
    </location>
    <ligand>
        <name>GTP</name>
        <dbReference type="ChEBI" id="CHEBI:37565"/>
        <label>2</label>
    </ligand>
</feature>
<evidence type="ECO:0000255" key="1">
    <source>
        <dbReference type="HAMAP-Rule" id="MF_00195"/>
    </source>
</evidence>
<organism>
    <name type="scientific">Alteromonas mediterranea (strain DSM 17117 / CIP 110805 / LMG 28347 / Deep ecotype)</name>
    <dbReference type="NCBI Taxonomy" id="1774373"/>
    <lineage>
        <taxon>Bacteria</taxon>
        <taxon>Pseudomonadati</taxon>
        <taxon>Pseudomonadota</taxon>
        <taxon>Gammaproteobacteria</taxon>
        <taxon>Alteromonadales</taxon>
        <taxon>Alteromonadaceae</taxon>
        <taxon>Alteromonas/Salinimonas group</taxon>
        <taxon>Alteromonas</taxon>
    </lineage>
</organism>
<keyword id="KW-0342">GTP-binding</keyword>
<keyword id="KW-0547">Nucleotide-binding</keyword>
<keyword id="KW-0677">Repeat</keyword>
<keyword id="KW-0690">Ribosome biogenesis</keyword>